<protein>
    <recommendedName>
        <fullName>Protein NLP8</fullName>
        <shortName>AtNLP8</shortName>
    </recommendedName>
    <alternativeName>
        <fullName>NIN-like protein 8</fullName>
    </alternativeName>
    <alternativeName>
        <fullName>Nodule inception protein-like protein 8</fullName>
    </alternativeName>
</protein>
<evidence type="ECO:0000250" key="1"/>
<evidence type="ECO:0000255" key="2"/>
<evidence type="ECO:0000255" key="3">
    <source>
        <dbReference type="PROSITE-ProRule" id="PRU00852"/>
    </source>
</evidence>
<evidence type="ECO:0000255" key="4">
    <source>
        <dbReference type="PROSITE-ProRule" id="PRU01081"/>
    </source>
</evidence>
<evidence type="ECO:0000256" key="5">
    <source>
        <dbReference type="SAM" id="MobiDB-lite"/>
    </source>
</evidence>
<evidence type="ECO:0000303" key="6">
    <source>
    </source>
</evidence>
<organism>
    <name type="scientific">Arabidopsis thaliana</name>
    <name type="common">Mouse-ear cress</name>
    <dbReference type="NCBI Taxonomy" id="3702"/>
    <lineage>
        <taxon>Eukaryota</taxon>
        <taxon>Viridiplantae</taxon>
        <taxon>Streptophyta</taxon>
        <taxon>Embryophyta</taxon>
        <taxon>Tracheophyta</taxon>
        <taxon>Spermatophyta</taxon>
        <taxon>Magnoliopsida</taxon>
        <taxon>eudicotyledons</taxon>
        <taxon>Gunneridae</taxon>
        <taxon>Pentapetalae</taxon>
        <taxon>rosids</taxon>
        <taxon>malvids</taxon>
        <taxon>Brassicales</taxon>
        <taxon>Brassicaceae</taxon>
        <taxon>Camelineae</taxon>
        <taxon>Arabidopsis</taxon>
    </lineage>
</organism>
<sequence>MENPFASREKGFGNYSDFPTEQMDGLSSNFGSGVRNLISDDMFNPSSELMNFDSLAAWCNSPSATDILFAQYGLSNSQPMPFGAFTSFHVADPKATSLTRSFYDLESSYYGEERSSAQEMNSQFHRSSDSDELSGKRRKVVNQKIGFPNVLNCTIPRSLSHSLDEKMLKALSLFMESSGSGEGILAQVWTPIKTGDQYLLSTCDQAYLLDPRFSQYREVSRRFTFAAEANQCSFPGLPGRVFISGVPEWTSNVMYYKTDEYLRMKHAIDNEVRGSIAIPILEASGTSCCAVMELVTSKEKPNFDMEMDSVCRALQAVNLRTAAIPRPQYLSSSQRDALAEIQDVLRTVCHAHKLPLALAWIPCRKDQSIRVSGQKSGENCILCIEETACYVNDMEMEGFVHACLEHCLREKEGIVGKAFISNQPFFSSDVKAYDISEYPIVQHARKYGLNAAVAIKLRSTYTGEDDYILELFLPVSMKGSLEQQLLLDSLSGTMQRICRTLRTVSEVGSTKKEGTKPGFRSSDMSNFPQTTSSENFQTISLDSEFNSTRSMFSGMSSDKENSITVSQGTLEQDVSKARTPEKKKSTTEKNVSLSALQQHFSGSLKDAAKSLGGETSAYFQAWVYFFCPTTLKRICRQHGIMRWPSRKINKVNRSLRKIQTVLDSVQGVEGGLKFDSATGEFIAVRPFIQEIDTQKGLSSLDNDAHARRSQEDMPDDTSFKLQEAKSVDNAIKLEEDTTMNQARPGSFMEVNASGQPWAWMAKESGLNGSEGIKSVCNLSSVEISDGMDPTIRCSGSIVEPNQSMSCSISDSSNGSGAVLRGSSSTSMEDWNQMRTHNSNSSESGSTTLIVKASYREDTVRFKFEPSVGCPQLYKEVGKRFKLQDGSFQLKYLDDEEEWVMLVTDSDLQECLEILHGMGKHSVKFLVRDLSAPLGSSGGSNGYLGTGL</sequence>
<proteinExistence type="evidence at protein level"/>
<dbReference type="EMBL" id="AC002335">
    <property type="protein sequence ID" value="AAB64326.1"/>
    <property type="molecule type" value="Genomic_DNA"/>
</dbReference>
<dbReference type="EMBL" id="CP002685">
    <property type="protein sequence ID" value="AEC10283.1"/>
    <property type="molecule type" value="Genomic_DNA"/>
</dbReference>
<dbReference type="EMBL" id="AY649251">
    <property type="protein sequence ID" value="AAT69168.1"/>
    <property type="molecule type" value="Genomic_DNA"/>
</dbReference>
<dbReference type="EMBL" id="AY102562">
    <property type="protein sequence ID" value="AAM76767.1"/>
    <property type="molecule type" value="mRNA"/>
</dbReference>
<dbReference type="EMBL" id="AY102563">
    <property type="protein sequence ID" value="AAM76768.1"/>
    <property type="molecule type" value="mRNA"/>
</dbReference>
<dbReference type="PIR" id="H84866">
    <property type="entry name" value="H84866"/>
</dbReference>
<dbReference type="RefSeq" id="NP_001154573.1">
    <molecule id="O22864-1"/>
    <property type="nucleotide sequence ID" value="NM_001161101.2"/>
</dbReference>
<dbReference type="SMR" id="O22864"/>
<dbReference type="FunCoup" id="O22864">
    <property type="interactions" value="274"/>
</dbReference>
<dbReference type="IntAct" id="O22864">
    <property type="interactions" value="3"/>
</dbReference>
<dbReference type="STRING" id="3702.O22864"/>
<dbReference type="PaxDb" id="3702-AT2G43500.2"/>
<dbReference type="ProteomicsDB" id="250536">
    <molecule id="O22864-1"/>
</dbReference>
<dbReference type="EnsemblPlants" id="AT2G43500.2">
    <molecule id="O22864-1"/>
    <property type="protein sequence ID" value="AT2G43500.2"/>
    <property type="gene ID" value="AT2G43500"/>
</dbReference>
<dbReference type="GeneID" id="818951"/>
<dbReference type="Gramene" id="AT2G43500.2">
    <molecule id="O22864-1"/>
    <property type="protein sequence ID" value="AT2G43500.2"/>
    <property type="gene ID" value="AT2G43500"/>
</dbReference>
<dbReference type="KEGG" id="ath:AT2G43500"/>
<dbReference type="Araport" id="AT2G43500"/>
<dbReference type="TAIR" id="AT2G43500">
    <property type="gene designation" value="NLP8"/>
</dbReference>
<dbReference type="eggNOG" id="ENOG502QQ6H">
    <property type="taxonomic scope" value="Eukaryota"/>
</dbReference>
<dbReference type="HOGENOM" id="CLU_008971_0_0_1"/>
<dbReference type="InParanoid" id="O22864"/>
<dbReference type="PhylomeDB" id="O22864"/>
<dbReference type="PRO" id="PR:O22864"/>
<dbReference type="Proteomes" id="UP000006548">
    <property type="component" value="Chromosome 2"/>
</dbReference>
<dbReference type="ExpressionAtlas" id="O22864">
    <property type="expression patterns" value="baseline and differential"/>
</dbReference>
<dbReference type="GO" id="GO:0005634">
    <property type="term" value="C:nucleus"/>
    <property type="evidence" value="ECO:0007669"/>
    <property type="project" value="UniProtKB-SubCell"/>
</dbReference>
<dbReference type="GO" id="GO:0003677">
    <property type="term" value="F:DNA binding"/>
    <property type="evidence" value="ECO:0007669"/>
    <property type="project" value="UniProtKB-KW"/>
</dbReference>
<dbReference type="GO" id="GO:0003700">
    <property type="term" value="F:DNA-binding transcription factor activity"/>
    <property type="evidence" value="ECO:0000250"/>
    <property type="project" value="TAIR"/>
</dbReference>
<dbReference type="GO" id="GO:0006355">
    <property type="term" value="P:regulation of DNA-templated transcription"/>
    <property type="evidence" value="ECO:0000304"/>
    <property type="project" value="TAIR"/>
</dbReference>
<dbReference type="CDD" id="cd06407">
    <property type="entry name" value="PB1_NLP"/>
    <property type="match status" value="1"/>
</dbReference>
<dbReference type="Gene3D" id="3.10.20.90">
    <property type="entry name" value="Phosphatidylinositol 3-kinase Catalytic Subunit, Chain A, domain 1"/>
    <property type="match status" value="1"/>
</dbReference>
<dbReference type="InterPro" id="IPR045012">
    <property type="entry name" value="NLP"/>
</dbReference>
<dbReference type="InterPro" id="IPR055081">
    <property type="entry name" value="NLP1-9_GAF"/>
</dbReference>
<dbReference type="InterPro" id="IPR053793">
    <property type="entry name" value="PB1-like"/>
</dbReference>
<dbReference type="InterPro" id="IPR000270">
    <property type="entry name" value="PB1_dom"/>
</dbReference>
<dbReference type="InterPro" id="IPR034891">
    <property type="entry name" value="PB1_NLP"/>
</dbReference>
<dbReference type="InterPro" id="IPR003035">
    <property type="entry name" value="RWP-RK_dom"/>
</dbReference>
<dbReference type="PANTHER" id="PTHR32002">
    <property type="entry name" value="PROTEIN NLP8"/>
    <property type="match status" value="1"/>
</dbReference>
<dbReference type="PANTHER" id="PTHR32002:SF41">
    <property type="entry name" value="PROTEIN NLP8"/>
    <property type="match status" value="1"/>
</dbReference>
<dbReference type="Pfam" id="PF22922">
    <property type="entry name" value="GAF_NLP"/>
    <property type="match status" value="1"/>
</dbReference>
<dbReference type="Pfam" id="PF00564">
    <property type="entry name" value="PB1"/>
    <property type="match status" value="1"/>
</dbReference>
<dbReference type="Pfam" id="PF02042">
    <property type="entry name" value="RWP-RK"/>
    <property type="match status" value="1"/>
</dbReference>
<dbReference type="SMART" id="SM00666">
    <property type="entry name" value="PB1"/>
    <property type="match status" value="1"/>
</dbReference>
<dbReference type="SUPFAM" id="SSF54277">
    <property type="entry name" value="CAD &amp; PB1 domains"/>
    <property type="match status" value="1"/>
</dbReference>
<dbReference type="PROSITE" id="PS51745">
    <property type="entry name" value="PB1"/>
    <property type="match status" value="1"/>
</dbReference>
<dbReference type="PROSITE" id="PS51519">
    <property type="entry name" value="RWP_RK"/>
    <property type="match status" value="1"/>
</dbReference>
<comment type="function">
    <text evidence="1">Probable transcription factor.</text>
</comment>
<comment type="interaction">
    <interactant intactId="EBI-59033124">
        <id>O22864</id>
    </interactant>
    <interactant intactId="EBI-2107143">
        <id>Q38997</id>
        <label>KIN10</label>
    </interactant>
    <organismsDiffer>false</organismsDiffer>
    <experiments>3</experiments>
</comment>
<comment type="subcellular location">
    <subcellularLocation>
        <location evidence="3">Nucleus</location>
    </subcellularLocation>
</comment>
<comment type="alternative products">
    <event type="alternative splicing"/>
    <isoform>
        <id>O22864-1</id>
        <name>1</name>
        <sequence type="displayed"/>
    </isoform>
    <isoform>
        <id>O22864-2</id>
        <name>2</name>
        <sequence type="described" ref="VSP_040195 VSP_040196"/>
    </isoform>
</comment>
<name>NLP8_ARATH</name>
<gene>
    <name type="primary">NLP8</name>
    <name type="ordered locus">At2g43500</name>
    <name type="ORF">T1O24.24</name>
</gene>
<keyword id="KW-0025">Alternative splicing</keyword>
<keyword id="KW-0175">Coiled coil</keyword>
<keyword id="KW-0238">DNA-binding</keyword>
<keyword id="KW-0539">Nucleus</keyword>
<keyword id="KW-1185">Reference proteome</keyword>
<keyword id="KW-0804">Transcription</keyword>
<keyword id="KW-0805">Transcription regulation</keyword>
<reference key="1">
    <citation type="journal article" date="1999" name="Nature">
        <title>Sequence and analysis of chromosome 2 of the plant Arabidopsis thaliana.</title>
        <authorList>
            <person name="Lin X."/>
            <person name="Kaul S."/>
            <person name="Rounsley S.D."/>
            <person name="Shea T.P."/>
            <person name="Benito M.-I."/>
            <person name="Town C.D."/>
            <person name="Fujii C.Y."/>
            <person name="Mason T.M."/>
            <person name="Bowman C.L."/>
            <person name="Barnstead M.E."/>
            <person name="Feldblyum T.V."/>
            <person name="Buell C.R."/>
            <person name="Ketchum K.A."/>
            <person name="Lee J.J."/>
            <person name="Ronning C.M."/>
            <person name="Koo H.L."/>
            <person name="Moffat K.S."/>
            <person name="Cronin L.A."/>
            <person name="Shen M."/>
            <person name="Pai G."/>
            <person name="Van Aken S."/>
            <person name="Umayam L."/>
            <person name="Tallon L.J."/>
            <person name="Gill J.E."/>
            <person name="Adams M.D."/>
            <person name="Carrera A.J."/>
            <person name="Creasy T.H."/>
            <person name="Goodman H.M."/>
            <person name="Somerville C.R."/>
            <person name="Copenhaver G.P."/>
            <person name="Preuss D."/>
            <person name="Nierman W.C."/>
            <person name="White O."/>
            <person name="Eisen J.A."/>
            <person name="Salzberg S.L."/>
            <person name="Fraser C.M."/>
            <person name="Venter J.C."/>
        </authorList>
    </citation>
    <scope>NUCLEOTIDE SEQUENCE [LARGE SCALE GENOMIC DNA]</scope>
    <source>
        <strain>cv. Columbia</strain>
    </source>
</reference>
<reference key="2">
    <citation type="journal article" date="2017" name="Plant J.">
        <title>Araport11: a complete reannotation of the Arabidopsis thaliana reference genome.</title>
        <authorList>
            <person name="Cheng C.Y."/>
            <person name="Krishnakumar V."/>
            <person name="Chan A.P."/>
            <person name="Thibaud-Nissen F."/>
            <person name="Schobel S."/>
            <person name="Town C.D."/>
        </authorList>
    </citation>
    <scope>GENOME REANNOTATION</scope>
    <source>
        <strain>cv. Columbia</strain>
    </source>
</reference>
<reference key="3">
    <citation type="submission" date="2004-06" db="EMBL/GenBank/DDBJ databases">
        <authorList>
            <person name="Underwood B.A."/>
            <person name="Xiao Y.-L."/>
            <person name="Moskal W.A. Jr."/>
            <person name="Monaghan E.L."/>
            <person name="Wang W."/>
            <person name="Redman J.C."/>
            <person name="Wu H.C."/>
            <person name="Utterback T."/>
            <person name="Town C.D."/>
        </authorList>
    </citation>
    <scope>NUCLEOTIDE SEQUENCE [LARGE SCALE GENOMIC DNA]</scope>
    <source>
        <strain>cv. Columbia</strain>
    </source>
</reference>
<reference key="4">
    <citation type="journal article" date="2005" name="Plant Physiol.">
        <title>Analysis of the cDNAs of hypothetical genes on Arabidopsis chromosome 2 reveals numerous transcript variants.</title>
        <authorList>
            <person name="Xiao Y.-L."/>
            <person name="Smith S.R."/>
            <person name="Ishmael N."/>
            <person name="Redman J.C."/>
            <person name="Kumar N."/>
            <person name="Monaghan E.L."/>
            <person name="Ayele M."/>
            <person name="Haas B.J."/>
            <person name="Wu H.C."/>
            <person name="Town C.D."/>
        </authorList>
    </citation>
    <scope>NUCLEOTIDE SEQUENCE [LARGE SCALE MRNA] (ISOFORM 2)</scope>
    <source>
        <strain>cv. Columbia</strain>
    </source>
</reference>
<reference key="5">
    <citation type="journal article" date="2005" name="J. Mol. Evol.">
        <title>Evolution of NIN-like proteins in Arabidopsis, rice, and Lotus japonicus.</title>
        <authorList>
            <person name="Schauser L."/>
            <person name="Wieloch W."/>
            <person name="Stougaard J."/>
        </authorList>
    </citation>
    <scope>GENE FAMILY</scope>
    <scope>NOMENCLATURE</scope>
</reference>
<accession>O22864</accession>
<accession>Q8L4P4</accession>
<feature type="chain" id="PRO_0000401493" description="Protein NLP8">
    <location>
        <begin position="1"/>
        <end position="947"/>
    </location>
</feature>
<feature type="domain" description="RWP-RK" evidence="3">
    <location>
        <begin position="577"/>
        <end position="671"/>
    </location>
</feature>
<feature type="domain" description="PB1" evidence="4">
    <location>
        <begin position="847"/>
        <end position="929"/>
    </location>
</feature>
<feature type="region of interest" description="Disordered" evidence="5">
    <location>
        <begin position="114"/>
        <end position="135"/>
    </location>
</feature>
<feature type="region of interest" description="Disordered" evidence="5">
    <location>
        <begin position="509"/>
        <end position="533"/>
    </location>
</feature>
<feature type="region of interest" description="Disordered" evidence="5">
    <location>
        <begin position="550"/>
        <end position="591"/>
    </location>
</feature>
<feature type="region of interest" description="Disordered" evidence="5">
    <location>
        <begin position="805"/>
        <end position="828"/>
    </location>
</feature>
<feature type="coiled-coil region" evidence="2">
    <location>
        <begin position="646"/>
        <end position="666"/>
    </location>
</feature>
<feature type="compositionally biased region" description="Basic and acidic residues" evidence="5">
    <location>
        <begin position="126"/>
        <end position="135"/>
    </location>
</feature>
<feature type="compositionally biased region" description="Polar residues" evidence="5">
    <location>
        <begin position="522"/>
        <end position="533"/>
    </location>
</feature>
<feature type="compositionally biased region" description="Polar residues" evidence="5">
    <location>
        <begin position="550"/>
        <end position="572"/>
    </location>
</feature>
<feature type="compositionally biased region" description="Basic and acidic residues" evidence="5">
    <location>
        <begin position="573"/>
        <end position="587"/>
    </location>
</feature>
<feature type="compositionally biased region" description="Low complexity" evidence="5">
    <location>
        <begin position="805"/>
        <end position="815"/>
    </location>
</feature>
<feature type="splice variant" id="VSP_040195" description="In isoform 2." evidence="6">
    <original>AVNLRTAAIPRPQYLSSSQRDALAEIQDVLRTV</original>
    <variation>VDTLFSPSLSFCFVLFFCLYVCLRVLLSPARLL</variation>
    <location>
        <begin position="316"/>
        <end position="348"/>
    </location>
</feature>
<feature type="splice variant" id="VSP_040196" description="In isoform 2." evidence="6">
    <location>
        <begin position="349"/>
        <end position="947"/>
    </location>
</feature>